<reference evidence="4" key="1">
    <citation type="journal article" date="2007" name="Nature">
        <title>Evolution of genes and genomes on the Drosophila phylogeny.</title>
        <authorList>
            <consortium name="Drosophila 12 genomes consortium"/>
        </authorList>
    </citation>
    <scope>NUCLEOTIDE SEQUENCE [LARGE SCALE GENOMIC DNA]</scope>
    <source>
        <strain evidence="4">Tucson 15081-1352.22</strain>
    </source>
</reference>
<protein>
    <recommendedName>
        <fullName evidence="1">KRR1 small subunit processome component homolog</fullName>
    </recommendedName>
    <alternativeName>
        <fullName evidence="1">KRR-R motif-containing protein 1</fullName>
    </alternativeName>
    <alternativeName>
        <fullName evidence="1">Protein dribble</fullName>
    </alternativeName>
</protein>
<gene>
    <name evidence="1" type="primary">dbe</name>
    <name evidence="1" type="synonym">dribble</name>
    <name type="ORF">GI18007</name>
</gene>
<sequence length="344" mass="39632">MSDNESEGPTNQTTEPVDNAWSLKIPAFKPEDNPHGLVEESSFATLFPKYREKYLKEVWPLVEQCLAEHHLKAELDLIEGSMVVKTTRKTWDPYIIIKSRDMIKLMARSVPFEQAKRVLQDDTGCDIIKIGNLVHKKEKFVKRRQRLIGPNGATLKSIELLTDCYVLVQGNTVSALGPYKGLQQVRDIVLDTMNNVHPIYNIKALMIKRELMKDPKLAGEDWSRFLPKFKNKNISKRKQPKNKKPKKEYTPFPPQQPESKIDKQLATGEYFLNKEQKQAKRQQERTAKQAEAAKKQDERRNKDFVPPTEDTPGPSRKRAAEDNKVDVQALKAKLMKANKKKERS</sequence>
<comment type="function">
    <text evidence="1">Required for 40S ribosome biogenesis. Involved in nucleolar processing of pre-18S ribosomal RNA and ribosome assembly. Binds to RNA. Required for female germline development, cell viability during eye development and for survival of dividing cells and epithelial cells during early wing disk development (By similarity).</text>
</comment>
<comment type="subunit">
    <text evidence="1">Monomer. Component of the ribosomal small subunit (SSU) processome (By similarity).</text>
</comment>
<comment type="subcellular location">
    <subcellularLocation>
        <location evidence="1">Nucleus</location>
        <location evidence="1">Nucleolus</location>
    </subcellularLocation>
</comment>
<comment type="similarity">
    <text evidence="2">Belongs to the KRR1 family.</text>
</comment>
<dbReference type="EMBL" id="CH933807">
    <property type="protein sequence ID" value="EDW13049.1"/>
    <property type="molecule type" value="Genomic_DNA"/>
</dbReference>
<dbReference type="RefSeq" id="XP_002003607.1">
    <property type="nucleotide sequence ID" value="XM_002003571.2"/>
</dbReference>
<dbReference type="SMR" id="B4KF66"/>
<dbReference type="FunCoup" id="B4KF66">
    <property type="interactions" value="1725"/>
</dbReference>
<dbReference type="EnsemblMetazoa" id="FBtr0168732">
    <property type="protein sequence ID" value="FBpp0167224"/>
    <property type="gene ID" value="FBgn0140747"/>
</dbReference>
<dbReference type="GeneID" id="6577657"/>
<dbReference type="KEGG" id="dmo:Dmoj_GI18007"/>
<dbReference type="CTD" id="33269"/>
<dbReference type="eggNOG" id="KOG2874">
    <property type="taxonomic scope" value="Eukaryota"/>
</dbReference>
<dbReference type="HOGENOM" id="CLU_040185_0_2_1"/>
<dbReference type="InParanoid" id="B4KF66"/>
<dbReference type="OMA" id="TPDIDKW"/>
<dbReference type="OrthoDB" id="441223at2759"/>
<dbReference type="PhylomeDB" id="B4KF66"/>
<dbReference type="Proteomes" id="UP000009192">
    <property type="component" value="Unassembled WGS sequence"/>
</dbReference>
<dbReference type="GO" id="GO:0005730">
    <property type="term" value="C:nucleolus"/>
    <property type="evidence" value="ECO:0007669"/>
    <property type="project" value="UniProtKB-SubCell"/>
</dbReference>
<dbReference type="GO" id="GO:0005654">
    <property type="term" value="C:nucleoplasm"/>
    <property type="evidence" value="ECO:0007669"/>
    <property type="project" value="EnsemblMetazoa"/>
</dbReference>
<dbReference type="GO" id="GO:0032040">
    <property type="term" value="C:small-subunit processome"/>
    <property type="evidence" value="ECO:0007669"/>
    <property type="project" value="TreeGrafter"/>
</dbReference>
<dbReference type="GO" id="GO:0003723">
    <property type="term" value="F:RNA binding"/>
    <property type="evidence" value="ECO:0007669"/>
    <property type="project" value="UniProtKB-KW"/>
</dbReference>
<dbReference type="GO" id="GO:0006364">
    <property type="term" value="P:rRNA processing"/>
    <property type="evidence" value="ECO:0007669"/>
    <property type="project" value="UniProtKB-KW"/>
</dbReference>
<dbReference type="CDD" id="cd22393">
    <property type="entry name" value="KH-I_KRR1_rpt1"/>
    <property type="match status" value="1"/>
</dbReference>
<dbReference type="CDD" id="cd22394">
    <property type="entry name" value="KH-I_KRR1_rpt2"/>
    <property type="match status" value="1"/>
</dbReference>
<dbReference type="FunFam" id="3.30.1370.10:FF:000011">
    <property type="entry name" value="KRR1 small subunit processome component"/>
    <property type="match status" value="1"/>
</dbReference>
<dbReference type="FunFam" id="3.30.1370.10:FF:000014">
    <property type="entry name" value="KRR1 small subunit processome component"/>
    <property type="match status" value="1"/>
</dbReference>
<dbReference type="Gene3D" id="3.30.1370.10">
    <property type="entry name" value="K Homology domain, type 1"/>
    <property type="match status" value="2"/>
</dbReference>
<dbReference type="InterPro" id="IPR004087">
    <property type="entry name" value="KH_dom"/>
</dbReference>
<dbReference type="InterPro" id="IPR036612">
    <property type="entry name" value="KH_dom_type_1_sf"/>
</dbReference>
<dbReference type="InterPro" id="IPR041174">
    <property type="entry name" value="KRR1-like_KH1"/>
</dbReference>
<dbReference type="InterPro" id="IPR048550">
    <property type="entry name" value="KRR1-like_KH1_euk"/>
</dbReference>
<dbReference type="InterPro" id="IPR048548">
    <property type="entry name" value="KRR1-like_KH2"/>
</dbReference>
<dbReference type="InterPro" id="IPR048549">
    <property type="entry name" value="KRR1-like_KH2_euk"/>
</dbReference>
<dbReference type="InterPro" id="IPR024166">
    <property type="entry name" value="rRNA_assembly_KRR1"/>
</dbReference>
<dbReference type="PANTHER" id="PTHR12581">
    <property type="entry name" value="HIV-1 REV BINDING PROTEIN 2, 3"/>
    <property type="match status" value="1"/>
</dbReference>
<dbReference type="PANTHER" id="PTHR12581:SF0">
    <property type="entry name" value="KRR1 SMALL SUBUNIT PROCESSOME COMPONENT HOMOLOG"/>
    <property type="match status" value="1"/>
</dbReference>
<dbReference type="Pfam" id="PF17903">
    <property type="entry name" value="KH_KRR1_1st"/>
    <property type="match status" value="1"/>
</dbReference>
<dbReference type="Pfam" id="PF21800">
    <property type="entry name" value="KH_KRR1_2nd"/>
    <property type="match status" value="1"/>
</dbReference>
<dbReference type="PIRSF" id="PIRSF006515">
    <property type="entry name" value="KRR1"/>
    <property type="match status" value="1"/>
</dbReference>
<dbReference type="SMART" id="SM00322">
    <property type="entry name" value="KH"/>
    <property type="match status" value="1"/>
</dbReference>
<dbReference type="SUPFAM" id="SSF54791">
    <property type="entry name" value="Eukaryotic type KH-domain (KH-domain type I)"/>
    <property type="match status" value="1"/>
</dbReference>
<name>KRR1_DROMO</name>
<accession>B4KF66</accession>
<evidence type="ECO:0000250" key="1">
    <source>
        <dbReference type="UniProtKB" id="Q9VPU8"/>
    </source>
</evidence>
<evidence type="ECO:0000255" key="2"/>
<evidence type="ECO:0000256" key="3">
    <source>
        <dbReference type="SAM" id="MobiDB-lite"/>
    </source>
</evidence>
<evidence type="ECO:0000312" key="4">
    <source>
        <dbReference type="EMBL" id="EDW13049.1"/>
    </source>
</evidence>
<keyword id="KW-0175">Coiled coil</keyword>
<keyword id="KW-0217">Developmental protein</keyword>
<keyword id="KW-0539">Nucleus</keyword>
<keyword id="KW-1185">Reference proteome</keyword>
<keyword id="KW-0687">Ribonucleoprotein</keyword>
<keyword id="KW-0690">Ribosome biogenesis</keyword>
<keyword id="KW-0694">RNA-binding</keyword>
<keyword id="KW-0698">rRNA processing</keyword>
<feature type="chain" id="PRO_0000415654" description="KRR1 small subunit processome component homolog">
    <location>
        <begin position="1"/>
        <end position="344"/>
    </location>
</feature>
<feature type="domain" description="KH" evidence="2">
    <location>
        <begin position="126"/>
        <end position="194"/>
    </location>
</feature>
<feature type="region of interest" description="Disordered" evidence="3">
    <location>
        <begin position="230"/>
        <end position="326"/>
    </location>
</feature>
<feature type="coiled-coil region" evidence="2">
    <location>
        <begin position="271"/>
        <end position="344"/>
    </location>
</feature>
<feature type="compositionally biased region" description="Basic residues" evidence="3">
    <location>
        <begin position="230"/>
        <end position="246"/>
    </location>
</feature>
<feature type="compositionally biased region" description="Basic and acidic residues" evidence="3">
    <location>
        <begin position="272"/>
        <end position="303"/>
    </location>
</feature>
<organism>
    <name type="scientific">Drosophila mojavensis</name>
    <name type="common">Fruit fly</name>
    <dbReference type="NCBI Taxonomy" id="7230"/>
    <lineage>
        <taxon>Eukaryota</taxon>
        <taxon>Metazoa</taxon>
        <taxon>Ecdysozoa</taxon>
        <taxon>Arthropoda</taxon>
        <taxon>Hexapoda</taxon>
        <taxon>Insecta</taxon>
        <taxon>Pterygota</taxon>
        <taxon>Neoptera</taxon>
        <taxon>Endopterygota</taxon>
        <taxon>Diptera</taxon>
        <taxon>Brachycera</taxon>
        <taxon>Muscomorpha</taxon>
        <taxon>Ephydroidea</taxon>
        <taxon>Drosophilidae</taxon>
        <taxon>Drosophila</taxon>
    </lineage>
</organism>
<proteinExistence type="inferred from homology"/>